<evidence type="ECO:0000255" key="1">
    <source>
        <dbReference type="HAMAP-Rule" id="MF_01364"/>
    </source>
</evidence>
<evidence type="ECO:0000305" key="2"/>
<proteinExistence type="inferred from homology"/>
<dbReference type="EMBL" id="AE001437">
    <property type="protein sequence ID" value="AAK81059.1"/>
    <property type="molecule type" value="Genomic_DNA"/>
</dbReference>
<dbReference type="PIR" id="H97283">
    <property type="entry name" value="H97283"/>
</dbReference>
<dbReference type="RefSeq" id="NP_349719.1">
    <property type="nucleotide sequence ID" value="NC_003030.1"/>
</dbReference>
<dbReference type="RefSeq" id="WP_010966399.1">
    <property type="nucleotide sequence ID" value="NC_003030.1"/>
</dbReference>
<dbReference type="SMR" id="Q97EJ1"/>
<dbReference type="STRING" id="272562.CA_C3120"/>
<dbReference type="KEGG" id="cac:CA_C3120"/>
<dbReference type="PATRIC" id="fig|272562.8.peg.3303"/>
<dbReference type="eggNOG" id="COG0199">
    <property type="taxonomic scope" value="Bacteria"/>
</dbReference>
<dbReference type="HOGENOM" id="CLU_139869_3_0_9"/>
<dbReference type="OrthoDB" id="9810484at2"/>
<dbReference type="Proteomes" id="UP000000814">
    <property type="component" value="Chromosome"/>
</dbReference>
<dbReference type="GO" id="GO:0005737">
    <property type="term" value="C:cytoplasm"/>
    <property type="evidence" value="ECO:0007669"/>
    <property type="project" value="UniProtKB-ARBA"/>
</dbReference>
<dbReference type="GO" id="GO:0015935">
    <property type="term" value="C:small ribosomal subunit"/>
    <property type="evidence" value="ECO:0007669"/>
    <property type="project" value="TreeGrafter"/>
</dbReference>
<dbReference type="GO" id="GO:0019843">
    <property type="term" value="F:rRNA binding"/>
    <property type="evidence" value="ECO:0007669"/>
    <property type="project" value="UniProtKB-UniRule"/>
</dbReference>
<dbReference type="GO" id="GO:0003735">
    <property type="term" value="F:structural constituent of ribosome"/>
    <property type="evidence" value="ECO:0007669"/>
    <property type="project" value="InterPro"/>
</dbReference>
<dbReference type="GO" id="GO:0008270">
    <property type="term" value="F:zinc ion binding"/>
    <property type="evidence" value="ECO:0007669"/>
    <property type="project" value="UniProtKB-UniRule"/>
</dbReference>
<dbReference type="GO" id="GO:0006412">
    <property type="term" value="P:translation"/>
    <property type="evidence" value="ECO:0007669"/>
    <property type="project" value="UniProtKB-UniRule"/>
</dbReference>
<dbReference type="FunFam" id="4.10.830.10:FF:000001">
    <property type="entry name" value="30S ribosomal protein S14 type Z"/>
    <property type="match status" value="1"/>
</dbReference>
<dbReference type="Gene3D" id="4.10.830.10">
    <property type="entry name" value="30s Ribosomal Protein S14, Chain N"/>
    <property type="match status" value="1"/>
</dbReference>
<dbReference type="HAMAP" id="MF_01364_B">
    <property type="entry name" value="Ribosomal_uS14_2_B"/>
    <property type="match status" value="1"/>
</dbReference>
<dbReference type="InterPro" id="IPR001209">
    <property type="entry name" value="Ribosomal_uS14"/>
</dbReference>
<dbReference type="InterPro" id="IPR023053">
    <property type="entry name" value="Ribosomal_uS14_bact"/>
</dbReference>
<dbReference type="InterPro" id="IPR043140">
    <property type="entry name" value="Ribosomal_uS14_sf"/>
</dbReference>
<dbReference type="NCBIfam" id="NF005974">
    <property type="entry name" value="PRK08061.1"/>
    <property type="match status" value="1"/>
</dbReference>
<dbReference type="PANTHER" id="PTHR19836">
    <property type="entry name" value="30S RIBOSOMAL PROTEIN S14"/>
    <property type="match status" value="1"/>
</dbReference>
<dbReference type="PANTHER" id="PTHR19836:SF19">
    <property type="entry name" value="SMALL RIBOSOMAL SUBUNIT PROTEIN US14M"/>
    <property type="match status" value="1"/>
</dbReference>
<dbReference type="Pfam" id="PF00253">
    <property type="entry name" value="Ribosomal_S14"/>
    <property type="match status" value="1"/>
</dbReference>
<dbReference type="SUPFAM" id="SSF57716">
    <property type="entry name" value="Glucocorticoid receptor-like (DNA-binding domain)"/>
    <property type="match status" value="1"/>
</dbReference>
<name>RS14Z_CLOAB</name>
<feature type="chain" id="PRO_0000130887" description="Small ribosomal subunit protein uS14">
    <location>
        <begin position="1"/>
        <end position="61"/>
    </location>
</feature>
<feature type="binding site" evidence="1">
    <location>
        <position position="24"/>
    </location>
    <ligand>
        <name>Zn(2+)</name>
        <dbReference type="ChEBI" id="CHEBI:29105"/>
    </ligand>
</feature>
<feature type="binding site" evidence="1">
    <location>
        <position position="27"/>
    </location>
    <ligand>
        <name>Zn(2+)</name>
        <dbReference type="ChEBI" id="CHEBI:29105"/>
    </ligand>
</feature>
<feature type="binding site" evidence="1">
    <location>
        <position position="40"/>
    </location>
    <ligand>
        <name>Zn(2+)</name>
        <dbReference type="ChEBI" id="CHEBI:29105"/>
    </ligand>
</feature>
<feature type="binding site" evidence="1">
    <location>
        <position position="43"/>
    </location>
    <ligand>
        <name>Zn(2+)</name>
        <dbReference type="ChEBI" id="CHEBI:29105"/>
    </ligand>
</feature>
<reference key="1">
    <citation type="journal article" date="2001" name="J. Bacteriol.">
        <title>Genome sequence and comparative analysis of the solvent-producing bacterium Clostridium acetobutylicum.</title>
        <authorList>
            <person name="Noelling J."/>
            <person name="Breton G."/>
            <person name="Omelchenko M.V."/>
            <person name="Makarova K.S."/>
            <person name="Zeng Q."/>
            <person name="Gibson R."/>
            <person name="Lee H.M."/>
            <person name="Dubois J."/>
            <person name="Qiu D."/>
            <person name="Hitti J."/>
            <person name="Wolf Y.I."/>
            <person name="Tatusov R.L."/>
            <person name="Sabathe F."/>
            <person name="Doucette-Stamm L.A."/>
            <person name="Soucaille P."/>
            <person name="Daly M.J."/>
            <person name="Bennett G.N."/>
            <person name="Koonin E.V."/>
            <person name="Smith D.R."/>
        </authorList>
    </citation>
    <scope>NUCLEOTIDE SEQUENCE [LARGE SCALE GENOMIC DNA]</scope>
    <source>
        <strain>ATCC 824 / DSM 792 / JCM 1419 / IAM 19013 / LMG 5710 / NBRC 13948 / NRRL B-527 / VKM B-1787 / 2291 / W</strain>
    </source>
</reference>
<sequence length="61" mass="7209">MARKALIEKWKKEPKYSTRAYTRCKICGRPHSVLKKYGICRICFRELAYKGEIPGCRKASW</sequence>
<keyword id="KW-0479">Metal-binding</keyword>
<keyword id="KW-1185">Reference proteome</keyword>
<keyword id="KW-0687">Ribonucleoprotein</keyword>
<keyword id="KW-0689">Ribosomal protein</keyword>
<keyword id="KW-0694">RNA-binding</keyword>
<keyword id="KW-0699">rRNA-binding</keyword>
<keyword id="KW-0862">Zinc</keyword>
<accession>Q97EJ1</accession>
<organism>
    <name type="scientific">Clostridium acetobutylicum (strain ATCC 824 / DSM 792 / JCM 1419 / IAM 19013 / LMG 5710 / NBRC 13948 / NRRL B-527 / VKM B-1787 / 2291 / W)</name>
    <dbReference type="NCBI Taxonomy" id="272562"/>
    <lineage>
        <taxon>Bacteria</taxon>
        <taxon>Bacillati</taxon>
        <taxon>Bacillota</taxon>
        <taxon>Clostridia</taxon>
        <taxon>Eubacteriales</taxon>
        <taxon>Clostridiaceae</taxon>
        <taxon>Clostridium</taxon>
    </lineage>
</organism>
<protein>
    <recommendedName>
        <fullName evidence="1">Small ribosomal subunit protein uS14</fullName>
    </recommendedName>
    <alternativeName>
        <fullName evidence="2">30S ribosomal protein S14 type Z</fullName>
    </alternativeName>
</protein>
<comment type="function">
    <text evidence="1">Binds 16S rRNA, required for the assembly of 30S particles and may also be responsible for determining the conformation of the 16S rRNA at the A site.</text>
</comment>
<comment type="cofactor">
    <cofactor evidence="1">
        <name>Zn(2+)</name>
        <dbReference type="ChEBI" id="CHEBI:29105"/>
    </cofactor>
    <text evidence="1">Binds 1 zinc ion per subunit.</text>
</comment>
<comment type="subunit">
    <text evidence="1">Part of the 30S ribosomal subunit. Contacts proteins S3 and S10.</text>
</comment>
<comment type="similarity">
    <text evidence="1">Belongs to the universal ribosomal protein uS14 family. Zinc-binding uS14 subfamily.</text>
</comment>
<gene>
    <name evidence="1" type="primary">rpsZ</name>
    <name evidence="1" type="synonym">rpsN</name>
    <name type="ordered locus">CA_C3120</name>
</gene>